<dbReference type="EC" id="1.3.7.7" evidence="1"/>
<dbReference type="EMBL" id="DQ821119">
    <property type="protein sequence ID" value="ABG79659.1"/>
    <property type="molecule type" value="Genomic_DNA"/>
</dbReference>
<dbReference type="RefSeq" id="YP_001023760.1">
    <property type="nucleotide sequence ID" value="NC_008829.1"/>
</dbReference>
<dbReference type="SMR" id="A2T392"/>
<dbReference type="GeneID" id="4788222"/>
<dbReference type="UniPathway" id="UPA00670"/>
<dbReference type="GO" id="GO:0009507">
    <property type="term" value="C:chloroplast"/>
    <property type="evidence" value="ECO:0007669"/>
    <property type="project" value="UniProtKB-SubCell"/>
</dbReference>
<dbReference type="GO" id="GO:0051539">
    <property type="term" value="F:4 iron, 4 sulfur cluster binding"/>
    <property type="evidence" value="ECO:0007669"/>
    <property type="project" value="UniProtKB-UniRule"/>
</dbReference>
<dbReference type="GO" id="GO:0005524">
    <property type="term" value="F:ATP binding"/>
    <property type="evidence" value="ECO:0007669"/>
    <property type="project" value="UniProtKB-UniRule"/>
</dbReference>
<dbReference type="GO" id="GO:0046872">
    <property type="term" value="F:metal ion binding"/>
    <property type="evidence" value="ECO:0007669"/>
    <property type="project" value="UniProtKB-KW"/>
</dbReference>
<dbReference type="GO" id="GO:0016730">
    <property type="term" value="F:oxidoreductase activity, acting on iron-sulfur proteins as donors"/>
    <property type="evidence" value="ECO:0007669"/>
    <property type="project" value="InterPro"/>
</dbReference>
<dbReference type="GO" id="GO:0016636">
    <property type="term" value="F:oxidoreductase activity, acting on the CH-CH group of donors, iron-sulfur protein as acceptor"/>
    <property type="evidence" value="ECO:0007669"/>
    <property type="project" value="UniProtKB-UniRule"/>
</dbReference>
<dbReference type="GO" id="GO:0036068">
    <property type="term" value="P:light-independent chlorophyll biosynthetic process"/>
    <property type="evidence" value="ECO:0007669"/>
    <property type="project" value="UniProtKB-UniRule"/>
</dbReference>
<dbReference type="GO" id="GO:0019685">
    <property type="term" value="P:photosynthesis, dark reaction"/>
    <property type="evidence" value="ECO:0007669"/>
    <property type="project" value="InterPro"/>
</dbReference>
<dbReference type="CDD" id="cd02032">
    <property type="entry name" value="Bchl-like"/>
    <property type="match status" value="1"/>
</dbReference>
<dbReference type="Gene3D" id="3.40.50.300">
    <property type="entry name" value="P-loop containing nucleotide triphosphate hydrolases"/>
    <property type="match status" value="1"/>
</dbReference>
<dbReference type="HAMAP" id="MF_00355">
    <property type="entry name" value="ChlL_BchL"/>
    <property type="match status" value="1"/>
</dbReference>
<dbReference type="InterPro" id="IPR030655">
    <property type="entry name" value="NifH/chlL_CS"/>
</dbReference>
<dbReference type="InterPro" id="IPR000392">
    <property type="entry name" value="NifH/frxC"/>
</dbReference>
<dbReference type="InterPro" id="IPR027417">
    <property type="entry name" value="P-loop_NTPase"/>
</dbReference>
<dbReference type="InterPro" id="IPR005971">
    <property type="entry name" value="Protochlorophyllide_ATP-bd"/>
</dbReference>
<dbReference type="NCBIfam" id="TIGR01281">
    <property type="entry name" value="DPOR_bchL"/>
    <property type="match status" value="1"/>
</dbReference>
<dbReference type="PANTHER" id="PTHR42864">
    <property type="entry name" value="LIGHT-INDEPENDENT PROTOCHLOROPHYLLIDE REDUCTASE IRON-SULFUR ATP-BINDING PROTEIN"/>
    <property type="match status" value="1"/>
</dbReference>
<dbReference type="PANTHER" id="PTHR42864:SF2">
    <property type="entry name" value="LIGHT-INDEPENDENT PROTOCHLOROPHYLLIDE REDUCTASE IRON-SULFUR ATP-BINDING PROTEIN"/>
    <property type="match status" value="1"/>
</dbReference>
<dbReference type="Pfam" id="PF00142">
    <property type="entry name" value="Fer4_NifH"/>
    <property type="match status" value="1"/>
</dbReference>
<dbReference type="PIRSF" id="PIRSF000363">
    <property type="entry name" value="Nitrogenase_iron"/>
    <property type="match status" value="1"/>
</dbReference>
<dbReference type="PRINTS" id="PR00091">
    <property type="entry name" value="NITROGNASEII"/>
</dbReference>
<dbReference type="SUPFAM" id="SSF52540">
    <property type="entry name" value="P-loop containing nucleoside triphosphate hydrolases"/>
    <property type="match status" value="1"/>
</dbReference>
<dbReference type="PROSITE" id="PS00746">
    <property type="entry name" value="NIFH_FRXC_1"/>
    <property type="match status" value="1"/>
</dbReference>
<dbReference type="PROSITE" id="PS00692">
    <property type="entry name" value="NIFH_FRXC_2"/>
    <property type="match status" value="1"/>
</dbReference>
<dbReference type="PROSITE" id="PS51026">
    <property type="entry name" value="NIFH_FRXC_3"/>
    <property type="match status" value="1"/>
</dbReference>
<comment type="function">
    <text evidence="1">Component of the dark-operative protochlorophyllide reductase (DPOR) that uses Mg-ATP and reduced ferredoxin to reduce ring D of protochlorophyllide (Pchlide) to form chlorophyllide a (Chlide). This reaction is light-independent. The L component serves as a unique electron donor to the NB-component of the complex, and binds Mg-ATP.</text>
</comment>
<comment type="catalytic activity">
    <reaction evidence="1">
        <text>chlorophyllide a + oxidized 2[4Fe-4S]-[ferredoxin] + 2 ADP + 2 phosphate = protochlorophyllide a + reduced 2[4Fe-4S]-[ferredoxin] + 2 ATP + 2 H2O</text>
        <dbReference type="Rhea" id="RHEA:28202"/>
        <dbReference type="Rhea" id="RHEA-COMP:10002"/>
        <dbReference type="Rhea" id="RHEA-COMP:10004"/>
        <dbReference type="ChEBI" id="CHEBI:15377"/>
        <dbReference type="ChEBI" id="CHEBI:30616"/>
        <dbReference type="ChEBI" id="CHEBI:33722"/>
        <dbReference type="ChEBI" id="CHEBI:33723"/>
        <dbReference type="ChEBI" id="CHEBI:43474"/>
        <dbReference type="ChEBI" id="CHEBI:83348"/>
        <dbReference type="ChEBI" id="CHEBI:83350"/>
        <dbReference type="ChEBI" id="CHEBI:456216"/>
        <dbReference type="EC" id="1.3.7.7"/>
    </reaction>
</comment>
<comment type="cofactor">
    <cofactor evidence="1">
        <name>[4Fe-4S] cluster</name>
        <dbReference type="ChEBI" id="CHEBI:49883"/>
    </cofactor>
    <text evidence="1">Binds 1 [4Fe-4S] cluster per dimer.</text>
</comment>
<comment type="pathway">
    <text evidence="1">Porphyrin-containing compound metabolism; chlorophyll biosynthesis (light-independent).</text>
</comment>
<comment type="subunit">
    <text evidence="1">Homodimer. Protochlorophyllide reductase is composed of three subunits; ChlL, ChlN and ChlB.</text>
</comment>
<comment type="subcellular location">
    <subcellularLocation>
        <location>Plastid</location>
        <location>Chloroplast</location>
    </subcellularLocation>
</comment>
<comment type="similarity">
    <text evidence="1">Belongs to the NifH/BchL/ChlL family.</text>
</comment>
<accession>A2T392</accession>
<geneLocation type="chloroplast"/>
<organism>
    <name type="scientific">Angiopteris evecta</name>
    <name type="common">Mule's foot fern</name>
    <name type="synonym">Polypodium evectum</name>
    <dbReference type="NCBI Taxonomy" id="13825"/>
    <lineage>
        <taxon>Eukaryota</taxon>
        <taxon>Viridiplantae</taxon>
        <taxon>Streptophyta</taxon>
        <taxon>Embryophyta</taxon>
        <taxon>Tracheophyta</taxon>
        <taxon>Polypodiopsida</taxon>
        <taxon>Marattiidae</taxon>
        <taxon>Marattiales</taxon>
        <taxon>Marattiaceae</taxon>
        <taxon>Angiopteris</taxon>
    </lineage>
</organism>
<gene>
    <name evidence="1" type="primary">chlL</name>
</gene>
<keyword id="KW-0004">4Fe-4S</keyword>
<keyword id="KW-0067">ATP-binding</keyword>
<keyword id="KW-0149">Chlorophyll biosynthesis</keyword>
<keyword id="KW-0150">Chloroplast</keyword>
<keyword id="KW-0408">Iron</keyword>
<keyword id="KW-0411">Iron-sulfur</keyword>
<keyword id="KW-0460">Magnesium</keyword>
<keyword id="KW-0479">Metal-binding</keyword>
<keyword id="KW-0547">Nucleotide-binding</keyword>
<keyword id="KW-0560">Oxidoreductase</keyword>
<keyword id="KW-0602">Photosynthesis</keyword>
<keyword id="KW-0934">Plastid</keyword>
<reference key="1">
    <citation type="journal article" date="2007" name="Am. Fern J.">
        <title>The complete plastid genome sequence of Angiopteris evecta (G. Forst.) Hoffm. (Marattiaceae).</title>
        <authorList>
            <person name="Roper J.M."/>
            <person name="Hansen S.K."/>
            <person name="Wolf P.G."/>
            <person name="Karol K.G."/>
            <person name="Mandoli D.F."/>
            <person name="Everett K.D.E."/>
            <person name="Kuehl J.V."/>
            <person name="Boore J.L."/>
        </authorList>
    </citation>
    <scope>NUCLEOTIDE SEQUENCE [LARGE SCALE GENOMIC DNA]</scope>
</reference>
<proteinExistence type="inferred from homology"/>
<name>CHLL_ANGEV</name>
<protein>
    <recommendedName>
        <fullName evidence="1">Light-independent protochlorophyllide reductase iron-sulfur ATP-binding protein</fullName>
        <shortName evidence="1">DPOR subunit L</shortName>
        <shortName evidence="1">LI-POR subunit L</shortName>
        <ecNumber evidence="1">1.3.7.7</ecNumber>
    </recommendedName>
</protein>
<evidence type="ECO:0000255" key="1">
    <source>
        <dbReference type="HAMAP-Rule" id="MF_00355"/>
    </source>
</evidence>
<feature type="chain" id="PRO_0000324083" description="Light-independent protochlorophyllide reductase iron-sulfur ATP-binding protein">
    <location>
        <begin position="1"/>
        <end position="290"/>
    </location>
</feature>
<feature type="binding site" evidence="1">
    <location>
        <begin position="10"/>
        <end position="15"/>
    </location>
    <ligand>
        <name>ATP</name>
        <dbReference type="ChEBI" id="CHEBI:30616"/>
    </ligand>
</feature>
<feature type="binding site" evidence="1">
    <location>
        <position position="14"/>
    </location>
    <ligand>
        <name>Mg(2+)</name>
        <dbReference type="ChEBI" id="CHEBI:18420"/>
    </ligand>
</feature>
<feature type="binding site" evidence="1">
    <location>
        <position position="39"/>
    </location>
    <ligand>
        <name>ATP</name>
        <dbReference type="ChEBI" id="CHEBI:30616"/>
    </ligand>
</feature>
<feature type="binding site" evidence="1">
    <location>
        <position position="95"/>
    </location>
    <ligand>
        <name>[4Fe-4S] cluster</name>
        <dbReference type="ChEBI" id="CHEBI:49883"/>
        <note>ligand shared between dimeric partners</note>
    </ligand>
</feature>
<feature type="binding site" evidence="1">
    <location>
        <position position="129"/>
    </location>
    <ligand>
        <name>[4Fe-4S] cluster</name>
        <dbReference type="ChEBI" id="CHEBI:49883"/>
        <note>ligand shared between dimeric partners</note>
    </ligand>
</feature>
<feature type="binding site" evidence="1">
    <location>
        <begin position="180"/>
        <end position="181"/>
    </location>
    <ligand>
        <name>ATP</name>
        <dbReference type="ChEBI" id="CHEBI:30616"/>
    </ligand>
</feature>
<sequence length="290" mass="31856">MKIAVYGKGGIGKSTTSCNISIALARRGKKVLQIGCDPKHDSTFTLTGFLIPTIIDTLQSKDYHYEDVWPEDVIYKGYGGVDCVEAGGPPAGAGCGGYVVGETVKSLKELNAFYEYDIILFDVLGDVVCGGFAAPLNYADYCIIITDNGFDALFAANRIAASVREKAHTHPLRLAGLVGNRTSKRDLIDKYVEACPMPVLEVLPLIEDIRVSRVKGKTLFEMAESQPTLNYVCEFYLNIADQILSQPEGVVPKEIPDRELFSLLSDFYLNPINSGKNENIENNLHDFMII</sequence>